<gene>
    <name evidence="1" type="primary">rpo6</name>
    <name evidence="1 5" type="synonym">rpoK</name>
    <name type="ordered locus">Saci_1370</name>
</gene>
<evidence type="ECO:0000255" key="1">
    <source>
        <dbReference type="HAMAP-Rule" id="MF_00192"/>
    </source>
</evidence>
<evidence type="ECO:0000269" key="2">
    <source>
    </source>
</evidence>
<evidence type="ECO:0000269" key="3">
    <source>
    </source>
</evidence>
<evidence type="ECO:0000269" key="4">
    <source ref="4"/>
</evidence>
<evidence type="ECO:0000303" key="5">
    <source ref="1"/>
</evidence>
<evidence type="ECO:0000305" key="6"/>
<evidence type="ECO:0000312" key="7">
    <source>
        <dbReference type="PDB" id="7OK0"/>
    </source>
</evidence>
<evidence type="ECO:0000312" key="8">
    <source>
        <dbReference type="PDB" id="7OQ4"/>
    </source>
</evidence>
<evidence type="ECO:0000312" key="9">
    <source>
        <dbReference type="PDB" id="7OQY"/>
    </source>
</evidence>
<evidence type="ECO:0007829" key="10">
    <source>
        <dbReference type="PDB" id="7OQ4"/>
    </source>
</evidence>
<evidence type="ECO:0007829" key="11">
    <source>
        <dbReference type="PDB" id="7OQY"/>
    </source>
</evidence>
<comment type="function">
    <text evidence="1 4">DNA-dependent RNA polymerase (RNAP) catalyzes the transcription of DNA into RNA using the four ribonucleoside triphosphates as substrates.</text>
</comment>
<comment type="function">
    <text evidence="4">Reconstitution experiments show this subunit is required for basic activity.</text>
</comment>
<comment type="catalytic activity">
    <reaction evidence="1 4">
        <text>RNA(n) + a ribonucleoside 5'-triphosphate = RNA(n+1) + diphosphate</text>
        <dbReference type="Rhea" id="RHEA:21248"/>
        <dbReference type="Rhea" id="RHEA-COMP:14527"/>
        <dbReference type="Rhea" id="RHEA-COMP:17342"/>
        <dbReference type="ChEBI" id="CHEBI:33019"/>
        <dbReference type="ChEBI" id="CHEBI:61557"/>
        <dbReference type="ChEBI" id="CHEBI:140395"/>
        <dbReference type="EC" id="2.7.7.6"/>
    </reaction>
</comment>
<comment type="subunit">
    <text evidence="2 3 4 7 8 9">Part of the 13-subunit RNA polymerase complex.</text>
</comment>
<comment type="subcellular location">
    <subcellularLocation>
        <location evidence="1">Cytoplasm</location>
    </subcellularLocation>
</comment>
<comment type="similarity">
    <text evidence="1">Belongs to the archaeal Rpo6/eukaryotic RPB6 RNA polymerase subunit family.</text>
</comment>
<name>RPO6_SULAC</name>
<proteinExistence type="evidence at protein level"/>
<reference key="1">
    <citation type="submission" date="1994-07" db="EMBL/GenBank/DDBJ databases">
        <authorList>
            <person name="Langer D."/>
            <person name="Hain J."/>
            <person name="Thuriaux P."/>
            <person name="Zillig W."/>
        </authorList>
    </citation>
    <scope>NUCLEOTIDE SEQUENCE [GENOMIC DNA]</scope>
    <source>
        <strain>ATCC 33909 / DSM 639 / JCM 8929 / NBRC 15157 / NCIMB 11770</strain>
    </source>
</reference>
<reference key="2">
    <citation type="journal article" date="2005" name="J. Bacteriol.">
        <title>The genome of Sulfolobus acidocaldarius, a model organism of the Crenarchaeota.</title>
        <authorList>
            <person name="Chen L."/>
            <person name="Bruegger K."/>
            <person name="Skovgaard M."/>
            <person name="Redder P."/>
            <person name="She Q."/>
            <person name="Torarinsson E."/>
            <person name="Greve B."/>
            <person name="Awayez M."/>
            <person name="Zibat A."/>
            <person name="Klenk H.-P."/>
            <person name="Garrett R.A."/>
        </authorList>
    </citation>
    <scope>NUCLEOTIDE SEQUENCE [LARGE SCALE GENOMIC DNA]</scope>
    <source>
        <strain>ATCC 33909 / DSM 639 / JCM 8929 / NBRC 15157 / NCIMB 11770</strain>
    </source>
</reference>
<reference key="3">
    <citation type="journal article" date="1992" name="Proc. Natl. Acad. Sci. U.S.A.">
        <title>Component H of the DNA-dependent RNA polymerases of Archaea is homologous to a subunit shared by the three eucaryal nuclear RNA polymerases.</title>
        <authorList>
            <person name="Klenk H.-P."/>
            <person name="Palm P."/>
            <person name="Lottspeich F."/>
            <person name="Zillig W."/>
        </authorList>
    </citation>
    <scope>SUBUNIT</scope>
    <source>
        <strain>ATCC 33909 / DSM 639 / JCM 8929 / NBRC 15157 / NCIMB 11770</strain>
    </source>
</reference>
<reference key="4">
    <citation type="journal article" date="1994" name="Syst. Appl. Microbiol.">
        <title>Structure and Function of the DNA-Dependent RNA Polymerase of Sulfolobus.</title>
        <authorList>
            <person name="Lanzendorfer M."/>
            <person name="Langer D."/>
            <person name="Hain J."/>
            <person name="Klenk H.-P."/>
            <person name="Holz I."/>
            <person name="Arnold-Ammer I."/>
            <person name="Zillig W."/>
        </authorList>
    </citation>
    <scope>FUNCTION</scope>
    <scope>CATALYTIC ACTIVITY</scope>
    <scope>SUBUNIT</scope>
    <source>
        <strain>ATCC 33909 / DSM 639 / JCM 8929 / NBRC 15157 / NCIMB 11770</strain>
    </source>
</reference>
<reference evidence="7 8 9" key="5">
    <citation type="journal article" date="2021" name="Nat. Commun.">
        <title>Structural basis of RNA polymerase inhibition by viral and host factors.</title>
        <authorList>
            <person name="Pilotto S."/>
            <person name="Fouqueau T."/>
            <person name="Lukoyanova N."/>
            <person name="Sheppard C."/>
            <person name="Lucas-Staat S."/>
            <person name="Diaz-Santin L.M."/>
            <person name="Matelska D."/>
            <person name="Prangishvili D."/>
            <person name="Cheung A.C.M."/>
            <person name="Werner F."/>
        </authorList>
    </citation>
    <scope>STRUCTURE BY ELECTRON MICROSCOPY (2.61 ANGSTROMS) OF RNAP WITH AND WITHOUT INHIBITORS</scope>
    <scope>SUBUNIT</scope>
    <source>
        <strain>ATCC 33909 / DSM 639 / JCM 8929 / NBRC 15157 / NCIMB 11770</strain>
    </source>
</reference>
<organism>
    <name type="scientific">Sulfolobus acidocaldarius (strain ATCC 33909 / DSM 639 / JCM 8929 / NBRC 15157 / NCIMB 11770)</name>
    <dbReference type="NCBI Taxonomy" id="330779"/>
    <lineage>
        <taxon>Archaea</taxon>
        <taxon>Thermoproteota</taxon>
        <taxon>Thermoprotei</taxon>
        <taxon>Sulfolobales</taxon>
        <taxon>Sulfolobaceae</taxon>
        <taxon>Sulfolobus</taxon>
    </lineage>
</organism>
<accession>P39463</accession>
<accession>Q4J925</accession>
<keyword id="KW-0002">3D-structure</keyword>
<keyword id="KW-0963">Cytoplasm</keyword>
<keyword id="KW-0240">DNA-directed RNA polymerase</keyword>
<keyword id="KW-0548">Nucleotidyltransferase</keyword>
<keyword id="KW-1185">Reference proteome</keyword>
<keyword id="KW-0804">Transcription</keyword>
<keyword id="KW-0808">Transferase</keyword>
<sequence length="89" mass="10237">MTIDKINEIFKENWKNKLTKYEIARIISARALQLSMGALPLIDTSNLKSDDVISIAEEELKRGVLPITIRRIYPNGQVELISVRKIENR</sequence>
<feature type="chain" id="PRO_0000133822" description="DNA-directed RNA polymerase subunit Rpo6">
    <location>
        <begin position="1"/>
        <end position="89"/>
    </location>
</feature>
<feature type="sequence conflict" description="In Ref. 1; CAA56729." evidence="6" ref="1">
    <original>LSMGALPLIDTSNL</original>
    <variation>YLWSLTTDTYFYP</variation>
    <location>
        <begin position="34"/>
        <end position="47"/>
    </location>
</feature>
<feature type="sequence conflict" description="In Ref. 1; CAA56729." evidence="6" ref="1">
    <original>D</original>
    <variation>A</variation>
    <location>
        <position position="51"/>
    </location>
</feature>
<feature type="sequence conflict" description="In Ref. 1; CAA56729." evidence="6" ref="1">
    <original>EEEL</original>
    <variation>RGI</variation>
    <location>
        <begin position="57"/>
        <end position="60"/>
    </location>
</feature>
<feature type="sequence conflict" description="In Ref. 1; CAA56729." evidence="6" ref="1">
    <location>
        <begin position="86"/>
        <end position="89"/>
    </location>
</feature>
<feature type="helix" evidence="11">
    <location>
        <begin position="5"/>
        <end position="13"/>
    </location>
</feature>
<feature type="helix" evidence="11">
    <location>
        <begin position="20"/>
        <end position="34"/>
    </location>
</feature>
<feature type="turn" evidence="11">
    <location>
        <begin position="35"/>
        <end position="37"/>
    </location>
</feature>
<feature type="strand" evidence="10">
    <location>
        <begin position="44"/>
        <end position="46"/>
    </location>
</feature>
<feature type="helix" evidence="11">
    <location>
        <begin position="52"/>
        <end position="61"/>
    </location>
</feature>
<feature type="strand" evidence="11">
    <location>
        <begin position="67"/>
        <end position="72"/>
    </location>
</feature>
<feature type="strand" evidence="11">
    <location>
        <begin position="78"/>
        <end position="82"/>
    </location>
</feature>
<dbReference type="EC" id="2.7.7.6" evidence="1 4"/>
<dbReference type="EMBL" id="X80753">
    <property type="protein sequence ID" value="CAA56729.1"/>
    <property type="molecule type" value="Genomic_DNA"/>
</dbReference>
<dbReference type="EMBL" id="CP000077">
    <property type="protein sequence ID" value="AAY80704.1"/>
    <property type="molecule type" value="Genomic_DNA"/>
</dbReference>
<dbReference type="PIR" id="S47328">
    <property type="entry name" value="S47328"/>
</dbReference>
<dbReference type="RefSeq" id="WP_011278206.1">
    <property type="nucleotide sequence ID" value="NC_007181.1"/>
</dbReference>
<dbReference type="PDB" id="7OK0">
    <property type="method" value="EM"/>
    <property type="resolution" value="2.90 A"/>
    <property type="chains" value="K=1-89"/>
</dbReference>
<dbReference type="PDB" id="7OQ4">
    <property type="method" value="EM"/>
    <property type="resolution" value="3.27 A"/>
    <property type="chains" value="K=1-89"/>
</dbReference>
<dbReference type="PDB" id="7OQY">
    <property type="method" value="EM"/>
    <property type="resolution" value="2.61 A"/>
    <property type="chains" value="K=1-89"/>
</dbReference>
<dbReference type="PDBsum" id="7OK0"/>
<dbReference type="PDBsum" id="7OQ4"/>
<dbReference type="PDBsum" id="7OQY"/>
<dbReference type="EMDB" id="EMD-12960"/>
<dbReference type="EMDB" id="EMD-13026"/>
<dbReference type="EMDB" id="EMD-13034"/>
<dbReference type="SMR" id="P39463"/>
<dbReference type="STRING" id="330779.Saci_1370"/>
<dbReference type="GeneID" id="14551872"/>
<dbReference type="KEGG" id="sai:Saci_1370"/>
<dbReference type="PATRIC" id="fig|330779.12.peg.1322"/>
<dbReference type="eggNOG" id="arCOG01268">
    <property type="taxonomic scope" value="Archaea"/>
</dbReference>
<dbReference type="HOGENOM" id="CLU_112527_4_0_2"/>
<dbReference type="Proteomes" id="UP000001018">
    <property type="component" value="Chromosome"/>
</dbReference>
<dbReference type="GO" id="GO:0005737">
    <property type="term" value="C:cytoplasm"/>
    <property type="evidence" value="ECO:0007669"/>
    <property type="project" value="UniProtKB-SubCell"/>
</dbReference>
<dbReference type="GO" id="GO:0000428">
    <property type="term" value="C:DNA-directed RNA polymerase complex"/>
    <property type="evidence" value="ECO:0000314"/>
    <property type="project" value="UniProtKB"/>
</dbReference>
<dbReference type="GO" id="GO:0003677">
    <property type="term" value="F:DNA binding"/>
    <property type="evidence" value="ECO:0007669"/>
    <property type="project" value="UniProtKB-UniRule"/>
</dbReference>
<dbReference type="GO" id="GO:0003899">
    <property type="term" value="F:DNA-directed RNA polymerase activity"/>
    <property type="evidence" value="ECO:0000314"/>
    <property type="project" value="UniProtKB"/>
</dbReference>
<dbReference type="GO" id="GO:0006351">
    <property type="term" value="P:DNA-templated transcription"/>
    <property type="evidence" value="ECO:0000314"/>
    <property type="project" value="UniProtKB"/>
</dbReference>
<dbReference type="GO" id="GO:0006360">
    <property type="term" value="P:transcription by RNA polymerase I"/>
    <property type="evidence" value="ECO:0007669"/>
    <property type="project" value="TreeGrafter"/>
</dbReference>
<dbReference type="GO" id="GO:0006366">
    <property type="term" value="P:transcription by RNA polymerase II"/>
    <property type="evidence" value="ECO:0007669"/>
    <property type="project" value="TreeGrafter"/>
</dbReference>
<dbReference type="GO" id="GO:0042797">
    <property type="term" value="P:tRNA transcription by RNA polymerase III"/>
    <property type="evidence" value="ECO:0007669"/>
    <property type="project" value="TreeGrafter"/>
</dbReference>
<dbReference type="Gene3D" id="3.90.940.10">
    <property type="match status" value="1"/>
</dbReference>
<dbReference type="HAMAP" id="MF_00192">
    <property type="entry name" value="RNApol_arch_Rpo6"/>
    <property type="match status" value="1"/>
</dbReference>
<dbReference type="InterPro" id="IPR020708">
    <property type="entry name" value="DNA-dir_RNA_polK_14-18kDa_CS"/>
</dbReference>
<dbReference type="InterPro" id="IPR006110">
    <property type="entry name" value="Pol_omega/Rpo6/RPB6"/>
</dbReference>
<dbReference type="InterPro" id="IPR036161">
    <property type="entry name" value="RPB6/omega-like_sf"/>
</dbReference>
<dbReference type="InterPro" id="IPR006111">
    <property type="entry name" value="Rpo6/Rpb6"/>
</dbReference>
<dbReference type="NCBIfam" id="NF002207">
    <property type="entry name" value="PRK01099.1-2"/>
    <property type="match status" value="1"/>
</dbReference>
<dbReference type="NCBIfam" id="NF002208">
    <property type="entry name" value="PRK01099.1-3"/>
    <property type="match status" value="1"/>
</dbReference>
<dbReference type="NCBIfam" id="NF002209">
    <property type="entry name" value="PRK01099.1-4"/>
    <property type="match status" value="1"/>
</dbReference>
<dbReference type="PANTHER" id="PTHR47227">
    <property type="entry name" value="DNA-DIRECTED RNA POLYMERASE SUBUNIT K"/>
    <property type="match status" value="1"/>
</dbReference>
<dbReference type="PANTHER" id="PTHR47227:SF5">
    <property type="entry name" value="DNA-DIRECTED RNA POLYMERASES I, II, AND III SUBUNIT RPABC2"/>
    <property type="match status" value="1"/>
</dbReference>
<dbReference type="Pfam" id="PF01192">
    <property type="entry name" value="RNA_pol_Rpb6"/>
    <property type="match status" value="1"/>
</dbReference>
<dbReference type="PIRSF" id="PIRSF000778">
    <property type="entry name" value="RpoK/RPB6"/>
    <property type="match status" value="1"/>
</dbReference>
<dbReference type="SMART" id="SM01409">
    <property type="entry name" value="RNA_pol_Rpb6"/>
    <property type="match status" value="1"/>
</dbReference>
<dbReference type="SUPFAM" id="SSF63562">
    <property type="entry name" value="RPB6/omega subunit-like"/>
    <property type="match status" value="1"/>
</dbReference>
<dbReference type="PROSITE" id="PS01111">
    <property type="entry name" value="RNA_POL_K_14KD"/>
    <property type="match status" value="1"/>
</dbReference>
<protein>
    <recommendedName>
        <fullName evidence="1">DNA-directed RNA polymerase subunit Rpo6</fullName>
        <ecNumber evidence="1 4">2.7.7.6</ecNumber>
    </recommendedName>
    <alternativeName>
        <fullName evidence="1">DNA-directed RNA polymerase subunit K</fullName>
    </alternativeName>
</protein>